<proteinExistence type="inferred from homology"/>
<comment type="function">
    <text evidence="2">GTP hydrolase that promotes the GTP-dependent binding of aminoacyl-tRNA to the A-site of ribosomes during protein biosynthesis.</text>
</comment>
<comment type="catalytic activity">
    <reaction evidence="2">
        <text>GTP + H2O = GDP + phosphate + H(+)</text>
        <dbReference type="Rhea" id="RHEA:19669"/>
        <dbReference type="ChEBI" id="CHEBI:15377"/>
        <dbReference type="ChEBI" id="CHEBI:15378"/>
        <dbReference type="ChEBI" id="CHEBI:37565"/>
        <dbReference type="ChEBI" id="CHEBI:43474"/>
        <dbReference type="ChEBI" id="CHEBI:58189"/>
        <dbReference type="EC" id="3.6.5.3"/>
    </reaction>
    <physiologicalReaction direction="left-to-right" evidence="2">
        <dbReference type="Rhea" id="RHEA:19670"/>
    </physiologicalReaction>
</comment>
<comment type="subunit">
    <text evidence="2">Monomer.</text>
</comment>
<comment type="subcellular location">
    <subcellularLocation>
        <location evidence="2">Cytoplasm</location>
    </subcellularLocation>
</comment>
<comment type="similarity">
    <text evidence="2">Belongs to the TRAFAC class translation factor GTPase superfamily. Classic translation factor GTPase family. EF-Tu/EF-1A subfamily.</text>
</comment>
<name>EFTU_SALTY</name>
<gene>
    <name evidence="2" type="primary">tufA</name>
    <name type="ordered locus">STM3445</name>
</gene>
<gene>
    <name evidence="2" type="primary">tufB</name>
    <name type="ordered locus">STM4146</name>
    <name type="ORF">STMF1.4</name>
</gene>
<accession>P0A1H5</accession>
<accession>P21694</accession>
<keyword id="KW-0963">Cytoplasm</keyword>
<keyword id="KW-0251">Elongation factor</keyword>
<keyword id="KW-0342">GTP-binding</keyword>
<keyword id="KW-0378">Hydrolase</keyword>
<keyword id="KW-0460">Magnesium</keyword>
<keyword id="KW-0479">Metal-binding</keyword>
<keyword id="KW-0488">Methylation</keyword>
<keyword id="KW-0547">Nucleotide-binding</keyword>
<keyword id="KW-0597">Phosphoprotein</keyword>
<keyword id="KW-0648">Protein biosynthesis</keyword>
<keyword id="KW-1185">Reference proteome</keyword>
<protein>
    <recommendedName>
        <fullName evidence="2">Elongation factor Tu</fullName>
        <shortName evidence="2">EF-Tu</shortName>
        <ecNumber evidence="2">3.6.5.3</ecNumber>
    </recommendedName>
</protein>
<reference key="1">
    <citation type="journal article" date="1990" name="Biochim. Biophys. Acta">
        <title>The role of EF-Tu and other translation components in determining translocation step size.</title>
        <authorList>
            <person name="Tuohy T.M.F."/>
            <person name="Thompson S."/>
            <person name="Gesteland R.F."/>
            <person name="Hughes D."/>
            <person name="Atkins J.F."/>
        </authorList>
    </citation>
    <scope>NUCLEOTIDE SEQUENCE [GENOMIC DNA]</scope>
    <source>
        <strain>LT2</strain>
    </source>
</reference>
<reference key="2">
    <citation type="journal article" date="2001" name="Nature">
        <title>Complete genome sequence of Salmonella enterica serovar Typhimurium LT2.</title>
        <authorList>
            <person name="McClelland M."/>
            <person name="Sanderson K.E."/>
            <person name="Spieth J."/>
            <person name="Clifton S.W."/>
            <person name="Latreille P."/>
            <person name="Courtney L."/>
            <person name="Porwollik S."/>
            <person name="Ali J."/>
            <person name="Dante M."/>
            <person name="Du F."/>
            <person name="Hou S."/>
            <person name="Layman D."/>
            <person name="Leonard S."/>
            <person name="Nguyen C."/>
            <person name="Scott K."/>
            <person name="Holmes A."/>
            <person name="Grewal N."/>
            <person name="Mulvaney E."/>
            <person name="Ryan E."/>
            <person name="Sun H."/>
            <person name="Florea L."/>
            <person name="Miller W."/>
            <person name="Stoneking T."/>
            <person name="Nhan M."/>
            <person name="Waterston R."/>
            <person name="Wilson R.K."/>
        </authorList>
    </citation>
    <scope>NUCLEOTIDE SEQUENCE [LARGE SCALE GENOMIC DNA]</scope>
    <source>
        <strain>LT2 / SGSC1412 / ATCC 700720</strain>
    </source>
</reference>
<organism>
    <name type="scientific">Salmonella typhimurium (strain LT2 / SGSC1412 / ATCC 700720)</name>
    <dbReference type="NCBI Taxonomy" id="99287"/>
    <lineage>
        <taxon>Bacteria</taxon>
        <taxon>Pseudomonadati</taxon>
        <taxon>Pseudomonadota</taxon>
        <taxon>Gammaproteobacteria</taxon>
        <taxon>Enterobacterales</taxon>
        <taxon>Enterobacteriaceae</taxon>
        <taxon>Salmonella</taxon>
    </lineage>
</organism>
<feature type="initiator methionine" description="Removed" evidence="1">
    <location>
        <position position="1"/>
    </location>
</feature>
<feature type="chain" id="PRO_0000091384" description="Elongation factor Tu">
    <location>
        <begin position="2"/>
        <end position="394"/>
    </location>
</feature>
<feature type="domain" description="tr-type G">
    <location>
        <begin position="10"/>
        <end position="204"/>
    </location>
</feature>
<feature type="region of interest" description="G1" evidence="1">
    <location>
        <begin position="19"/>
        <end position="26"/>
    </location>
</feature>
<feature type="region of interest" description="G2" evidence="1">
    <location>
        <begin position="60"/>
        <end position="64"/>
    </location>
</feature>
<feature type="region of interest" description="G3" evidence="1">
    <location>
        <begin position="81"/>
        <end position="84"/>
    </location>
</feature>
<feature type="region of interest" description="G4" evidence="1">
    <location>
        <begin position="136"/>
        <end position="139"/>
    </location>
</feature>
<feature type="region of interest" description="G5" evidence="1">
    <location>
        <begin position="174"/>
        <end position="176"/>
    </location>
</feature>
<feature type="binding site" evidence="2">
    <location>
        <begin position="19"/>
        <end position="26"/>
    </location>
    <ligand>
        <name>GTP</name>
        <dbReference type="ChEBI" id="CHEBI:37565"/>
    </ligand>
</feature>
<feature type="binding site" evidence="2">
    <location>
        <position position="26"/>
    </location>
    <ligand>
        <name>Mg(2+)</name>
        <dbReference type="ChEBI" id="CHEBI:18420"/>
    </ligand>
</feature>
<feature type="binding site" evidence="2">
    <location>
        <begin position="81"/>
        <end position="85"/>
    </location>
    <ligand>
        <name>GTP</name>
        <dbReference type="ChEBI" id="CHEBI:37565"/>
    </ligand>
</feature>
<feature type="binding site" evidence="2">
    <location>
        <begin position="136"/>
        <end position="139"/>
    </location>
    <ligand>
        <name>GTP</name>
        <dbReference type="ChEBI" id="CHEBI:37565"/>
    </ligand>
</feature>
<feature type="modified residue" description="N6,N6-dimethyllysine" evidence="1">
    <location>
        <position position="57"/>
    </location>
</feature>
<feature type="modified residue" description="Phosphothreonine" evidence="1">
    <location>
        <position position="383"/>
    </location>
</feature>
<dbReference type="EC" id="3.6.5.3" evidence="2"/>
<dbReference type="EMBL" id="X55116">
    <property type="protein sequence ID" value="CAA38912.1"/>
    <property type="molecule type" value="Genomic_DNA"/>
</dbReference>
<dbReference type="EMBL" id="X55117">
    <property type="protein sequence ID" value="CAA38913.1"/>
    <property type="molecule type" value="Genomic_DNA"/>
</dbReference>
<dbReference type="EMBL" id="AF170176">
    <property type="protein sequence ID" value="AAF33513.1"/>
    <property type="molecule type" value="Genomic_DNA"/>
</dbReference>
<dbReference type="EMBL" id="AE006468">
    <property type="protein sequence ID" value="AAL22308.1"/>
    <property type="molecule type" value="Genomic_DNA"/>
</dbReference>
<dbReference type="EMBL" id="AE006468">
    <property type="protein sequence ID" value="AAL22974.1"/>
    <property type="molecule type" value="Genomic_DNA"/>
</dbReference>
<dbReference type="PIR" id="S13560">
    <property type="entry name" value="S13560"/>
</dbReference>
<dbReference type="PIR" id="S13561">
    <property type="entry name" value="S13561"/>
</dbReference>
<dbReference type="RefSeq" id="NP_462349.1">
    <property type="nucleotide sequence ID" value="NC_003197.2"/>
</dbReference>
<dbReference type="RefSeq" id="NP_463015.1">
    <property type="nucleotide sequence ID" value="NC_003197.2"/>
</dbReference>
<dbReference type="SMR" id="P0A1H5"/>
<dbReference type="STRING" id="99287.STM3445"/>
<dbReference type="PaxDb" id="99287-STM3445"/>
<dbReference type="GeneID" id="1254968"/>
<dbReference type="GeneID" id="1255672"/>
<dbReference type="KEGG" id="stm:STM3445"/>
<dbReference type="KEGG" id="stm:STM4146"/>
<dbReference type="PATRIC" id="fig|99287.12.peg.3642"/>
<dbReference type="HOGENOM" id="CLU_007265_0_2_6"/>
<dbReference type="OMA" id="EGDKEWG"/>
<dbReference type="PhylomeDB" id="P0A1H5"/>
<dbReference type="BioCyc" id="SENT99287:STM4146-MONOMER"/>
<dbReference type="Proteomes" id="UP000001014">
    <property type="component" value="Chromosome"/>
</dbReference>
<dbReference type="GO" id="GO:0005737">
    <property type="term" value="C:cytoplasm"/>
    <property type="evidence" value="ECO:0007669"/>
    <property type="project" value="UniProtKB-SubCell"/>
</dbReference>
<dbReference type="GO" id="GO:0005525">
    <property type="term" value="F:GTP binding"/>
    <property type="evidence" value="ECO:0007669"/>
    <property type="project" value="UniProtKB-UniRule"/>
</dbReference>
<dbReference type="GO" id="GO:0003924">
    <property type="term" value="F:GTPase activity"/>
    <property type="evidence" value="ECO:0007669"/>
    <property type="project" value="InterPro"/>
</dbReference>
<dbReference type="GO" id="GO:0097216">
    <property type="term" value="F:guanosine tetraphosphate binding"/>
    <property type="evidence" value="ECO:0007669"/>
    <property type="project" value="UniProtKB-ARBA"/>
</dbReference>
<dbReference type="GO" id="GO:0003746">
    <property type="term" value="F:translation elongation factor activity"/>
    <property type="evidence" value="ECO:0000318"/>
    <property type="project" value="GO_Central"/>
</dbReference>
<dbReference type="GO" id="GO:0006414">
    <property type="term" value="P:translational elongation"/>
    <property type="evidence" value="ECO:0000318"/>
    <property type="project" value="GO_Central"/>
</dbReference>
<dbReference type="CDD" id="cd01884">
    <property type="entry name" value="EF_Tu"/>
    <property type="match status" value="1"/>
</dbReference>
<dbReference type="CDD" id="cd03697">
    <property type="entry name" value="EFTU_II"/>
    <property type="match status" value="1"/>
</dbReference>
<dbReference type="CDD" id="cd03707">
    <property type="entry name" value="EFTU_III"/>
    <property type="match status" value="1"/>
</dbReference>
<dbReference type="FunFam" id="2.40.30.10:FF:000001">
    <property type="entry name" value="Elongation factor Tu"/>
    <property type="match status" value="1"/>
</dbReference>
<dbReference type="FunFam" id="3.40.50.300:FF:000003">
    <property type="entry name" value="Elongation factor Tu"/>
    <property type="match status" value="1"/>
</dbReference>
<dbReference type="Gene3D" id="3.40.50.300">
    <property type="entry name" value="P-loop containing nucleotide triphosphate hydrolases"/>
    <property type="match status" value="1"/>
</dbReference>
<dbReference type="Gene3D" id="2.40.30.10">
    <property type="entry name" value="Translation factors"/>
    <property type="match status" value="2"/>
</dbReference>
<dbReference type="HAMAP" id="MF_00118_B">
    <property type="entry name" value="EF_Tu_B"/>
    <property type="match status" value="1"/>
</dbReference>
<dbReference type="InterPro" id="IPR041709">
    <property type="entry name" value="EF-Tu_GTP-bd"/>
</dbReference>
<dbReference type="InterPro" id="IPR050055">
    <property type="entry name" value="EF-Tu_GTPase"/>
</dbReference>
<dbReference type="InterPro" id="IPR004161">
    <property type="entry name" value="EFTu-like_2"/>
</dbReference>
<dbReference type="InterPro" id="IPR033720">
    <property type="entry name" value="EFTU_2"/>
</dbReference>
<dbReference type="InterPro" id="IPR031157">
    <property type="entry name" value="G_TR_CS"/>
</dbReference>
<dbReference type="InterPro" id="IPR027417">
    <property type="entry name" value="P-loop_NTPase"/>
</dbReference>
<dbReference type="InterPro" id="IPR005225">
    <property type="entry name" value="Small_GTP-bd"/>
</dbReference>
<dbReference type="InterPro" id="IPR000795">
    <property type="entry name" value="T_Tr_GTP-bd_dom"/>
</dbReference>
<dbReference type="InterPro" id="IPR009000">
    <property type="entry name" value="Transl_B-barrel_sf"/>
</dbReference>
<dbReference type="InterPro" id="IPR009001">
    <property type="entry name" value="Transl_elong_EF1A/Init_IF2_C"/>
</dbReference>
<dbReference type="InterPro" id="IPR004541">
    <property type="entry name" value="Transl_elong_EFTu/EF1A_bac/org"/>
</dbReference>
<dbReference type="InterPro" id="IPR004160">
    <property type="entry name" value="Transl_elong_EFTu/EF1A_C"/>
</dbReference>
<dbReference type="NCBIfam" id="TIGR00485">
    <property type="entry name" value="EF-Tu"/>
    <property type="match status" value="1"/>
</dbReference>
<dbReference type="NCBIfam" id="NF000766">
    <property type="entry name" value="PRK00049.1"/>
    <property type="match status" value="1"/>
</dbReference>
<dbReference type="NCBIfam" id="NF009372">
    <property type="entry name" value="PRK12735.1"/>
    <property type="match status" value="1"/>
</dbReference>
<dbReference type="NCBIfam" id="NF009373">
    <property type="entry name" value="PRK12736.1"/>
    <property type="match status" value="1"/>
</dbReference>
<dbReference type="NCBIfam" id="TIGR00231">
    <property type="entry name" value="small_GTP"/>
    <property type="match status" value="1"/>
</dbReference>
<dbReference type="PANTHER" id="PTHR43721:SF22">
    <property type="entry name" value="ELONGATION FACTOR TU, MITOCHONDRIAL"/>
    <property type="match status" value="1"/>
</dbReference>
<dbReference type="PANTHER" id="PTHR43721">
    <property type="entry name" value="ELONGATION FACTOR TU-RELATED"/>
    <property type="match status" value="1"/>
</dbReference>
<dbReference type="Pfam" id="PF00009">
    <property type="entry name" value="GTP_EFTU"/>
    <property type="match status" value="1"/>
</dbReference>
<dbReference type="Pfam" id="PF03144">
    <property type="entry name" value="GTP_EFTU_D2"/>
    <property type="match status" value="1"/>
</dbReference>
<dbReference type="Pfam" id="PF03143">
    <property type="entry name" value="GTP_EFTU_D3"/>
    <property type="match status" value="1"/>
</dbReference>
<dbReference type="PRINTS" id="PR00315">
    <property type="entry name" value="ELONGATNFCT"/>
</dbReference>
<dbReference type="SUPFAM" id="SSF50465">
    <property type="entry name" value="EF-Tu/eEF-1alpha/eIF2-gamma C-terminal domain"/>
    <property type="match status" value="1"/>
</dbReference>
<dbReference type="SUPFAM" id="SSF52540">
    <property type="entry name" value="P-loop containing nucleoside triphosphate hydrolases"/>
    <property type="match status" value="1"/>
</dbReference>
<dbReference type="SUPFAM" id="SSF50447">
    <property type="entry name" value="Translation proteins"/>
    <property type="match status" value="1"/>
</dbReference>
<dbReference type="PROSITE" id="PS00301">
    <property type="entry name" value="G_TR_1"/>
    <property type="match status" value="1"/>
</dbReference>
<dbReference type="PROSITE" id="PS51722">
    <property type="entry name" value="G_TR_2"/>
    <property type="match status" value="1"/>
</dbReference>
<sequence length="394" mass="43284">MSKEKFERTKPHVNVGTIGHVDHGKTTLTAAITTVLAKTYGGAARAFDQIDNAPEEKARGITINTSHVEYDTPTRHYAHVDCPGHADYVKNMITGAAQMDGAILVVAATDGPMPQTREHILLGRQVGVPYIIVFLNKCDMVDDEELLELVEMEVRELLSQYDFPGDDTPIVRGSALKALEGDAEWEAKIIELAGFLDSYIPEPERAIDKPFLLPIEDVFSISGRGTVVTGRVERGIIKVGEEVEIVGIKETQKSTCTGVEMFRKLLDEGRAGENVGVLLRGIKREEIERGQVLAKPGTIKPHTKFESEVYILSKDEGGRHTPFFKGYRPQFYFRTTDVTGTIELPEGVEMVMPGDNIKMVVTLIHPIAMDDGLRFAIREGGRTVGAGVVAKVLG</sequence>
<evidence type="ECO:0000250" key="1"/>
<evidence type="ECO:0000255" key="2">
    <source>
        <dbReference type="HAMAP-Rule" id="MF_00118"/>
    </source>
</evidence>